<proteinExistence type="inferred from homology"/>
<evidence type="ECO:0000250" key="1"/>
<evidence type="ECO:0000255" key="2"/>
<evidence type="ECO:0000305" key="3"/>
<accession>P30206</accession>
<protein>
    <recommendedName>
        <fullName>Spike glycoprotein</fullName>
        <shortName>S glycoprotein</shortName>
    </recommendedName>
    <alternativeName>
        <fullName>E2</fullName>
    </alternativeName>
    <alternativeName>
        <fullName>Peplomer protein</fullName>
    </alternativeName>
    <component>
        <recommendedName>
            <fullName>Spike protein S1</fullName>
        </recommendedName>
    </component>
</protein>
<keyword id="KW-0165">Cleavage on pair of basic residues</keyword>
<keyword id="KW-1170">Fusion of virus membrane with host endosomal membrane</keyword>
<keyword id="KW-1168">Fusion of virus membrane with host membrane</keyword>
<keyword id="KW-0325">Glycoprotein</keyword>
<keyword id="KW-1043">Host membrane</keyword>
<keyword id="KW-0945">Host-virus interaction</keyword>
<keyword id="KW-0472">Membrane</keyword>
<keyword id="KW-1161">Viral attachment to host cell</keyword>
<keyword id="KW-0261">Viral envelope protein</keyword>
<keyword id="KW-1162">Viral penetration into host cytoplasm</keyword>
<keyword id="KW-0946">Virion</keyword>
<keyword id="KW-0843">Virulence</keyword>
<keyword id="KW-1164">Virus endocytosis by host</keyword>
<keyword id="KW-1160">Virus entry into host cell</keyword>
<organismHost>
    <name type="scientific">Gallus gallus</name>
    <name type="common">Chicken</name>
    <dbReference type="NCBI Taxonomy" id="9031"/>
</organismHost>
<comment type="function">
    <text>S1 attaches the virion to the cell membrane by interacting with cell receptors, initiating the infection.</text>
</comment>
<comment type="function">
    <text evidence="1">S2 is a class I viral fusion protein. Under the current model, the protein has at least 3 conformational states: pre-fusion native state, pre-hairpin intermediate state, and post-fusion hairpin state. During viral and target cell membrane fusion, the coiled coil regions (heptad repeats) assume a trimer-of-hairpins structure, positioning the fusion peptide in close proximity to the C-terminal region of the ectodomain. The formation of this structure appears to drive apposition and subsequent fusion of viral and target cell membranes (By similarity).</text>
</comment>
<comment type="subunit">
    <text evidence="1">Homotrimer; each monomer consists of a S1 and a S2 subunit. The resulting peplomers protrude from the virus surface as spikes (By similarity).</text>
</comment>
<comment type="subcellular location">
    <molecule>Spike protein S1</molecule>
    <subcellularLocation>
        <location evidence="1">Virion membrane</location>
        <topology evidence="1">Peripheral membrane protein</topology>
    </subcellularLocation>
    <subcellularLocation>
        <location evidence="1">Host endoplasmic reticulum-Golgi intermediate compartment membrane</location>
        <topology evidence="1">Peripheral membrane protein</topology>
    </subcellularLocation>
    <text evidence="1">Accumulates in the endoplasmic reticulum-Golgi intermediate compartment, where it participates in virus particle assembly. S1 is not anchored to the viral envelope, but associates with the extravirion surface through its binding to S2 (By similarity).</text>
</comment>
<comment type="PTM">
    <text evidence="1">Specific enzymatic cleavages in vivo yield mature proteins. The precursor is processed into S1 and S2 by host cell furin or furin-like protease to yield the mature S1 and S2 proteins. The cleavage site between S1 and S2 requires the optimal sequence [KR]-X-[KR]-R. Cleavage is not necessary for virus-cell fusion (By similarity).</text>
</comment>
<comment type="similarity">
    <text evidence="3">Belongs to the coronaviruses spike protein family.</text>
</comment>
<reference key="1">
    <citation type="submission" date="1991-03" db="EMBL/GenBank/DDBJ databases">
        <authorList>
            <person name="Cavanagh D."/>
            <person name="Davis P.J."/>
            <person name="Cook J.K.A."/>
            <person name="Li D."/>
            <person name="Kant A."/>
            <person name="Koch G."/>
        </authorList>
    </citation>
    <scope>NUCLEOTIDE SEQUENCE [GENOMIC RNA]</scope>
</reference>
<feature type="chain" id="PRO_0000037177" description="Spike glycoprotein">
    <location>
        <begin position="1"/>
        <end position="520" status="greater than"/>
    </location>
</feature>
<feature type="chain" id="PRO_0000037178" description="Spike protein S1" evidence="2">
    <location>
        <begin position="1"/>
        <end position="520"/>
    </location>
</feature>
<feature type="topological domain" description="Extracellular" evidence="2">
    <location>
        <begin position="1" status="less than"/>
        <end position="520" status="greater than"/>
    </location>
</feature>
<feature type="glycosylation site" description="N-linked (GlcNAc...) asparagine; by host" evidence="2">
    <location>
        <position position="5"/>
    </location>
</feature>
<feature type="glycosylation site" description="N-linked (GlcNAc...) asparagine; by host" evidence="2">
    <location>
        <position position="33"/>
    </location>
</feature>
<feature type="glycosylation site" description="N-linked (GlcNAc...) asparagine; by host" evidence="2">
    <location>
        <position position="56"/>
    </location>
</feature>
<feature type="glycosylation site" description="N-linked (GlcNAc...) asparagine; by host" evidence="2">
    <location>
        <position position="84"/>
    </location>
</feature>
<feature type="glycosylation site" description="N-linked (GlcNAc...) asparagine; by host" evidence="2">
    <location>
        <position position="121"/>
    </location>
</feature>
<feature type="glycosylation site" description="N-linked (GlcNAc...) asparagine; by host" evidence="2">
    <location>
        <position position="127"/>
    </location>
</feature>
<feature type="glycosylation site" description="N-linked (GlcNAc...) asparagine; by host" evidence="2">
    <location>
        <position position="146"/>
    </location>
</feature>
<feature type="glycosylation site" description="N-linked (GlcNAc...) asparagine; by host" evidence="2">
    <location>
        <position position="161"/>
    </location>
</feature>
<feature type="glycosylation site" description="N-linked (GlcNAc...) asparagine; by host" evidence="2">
    <location>
        <position position="195"/>
    </location>
</feature>
<feature type="glycosylation site" description="N-linked (GlcNAc...) asparagine; by host" evidence="2">
    <location>
        <position position="220"/>
    </location>
</feature>
<feature type="glycosylation site" description="N-linked (GlcNAc...) asparagine; by host" evidence="2">
    <location>
        <position position="230"/>
    </location>
</feature>
<feature type="glycosylation site" description="N-linked (GlcNAc...) asparagine; by host" evidence="2">
    <location>
        <position position="247"/>
    </location>
</feature>
<feature type="glycosylation site" description="N-linked (GlcNAc...) asparagine; by host" evidence="2">
    <location>
        <position position="254"/>
    </location>
</feature>
<feature type="glycosylation site" description="N-linked (GlcNAc...) asparagine; by host" evidence="2">
    <location>
        <position position="259"/>
    </location>
</feature>
<feature type="glycosylation site" description="N-linked (GlcNAc...) asparagine; by host" evidence="2">
    <location>
        <position position="289"/>
    </location>
</feature>
<feature type="glycosylation site" description="N-linked (GlcNAc...) asparagine; by host" evidence="2">
    <location>
        <position position="408"/>
    </location>
</feature>
<feature type="glycosylation site" description="N-linked (GlcNAc...) asparagine; by host" evidence="2">
    <location>
        <position position="430"/>
    </location>
</feature>
<feature type="glycosylation site" description="N-linked (GlcNAc...) asparagine; by host" evidence="2">
    <location>
        <position position="496"/>
    </location>
</feature>
<feature type="glycosylation site" description="N-linked (GlcNAc...) asparagine; by host" evidence="2">
    <location>
        <position position="513"/>
    </location>
</feature>
<feature type="non-terminal residue">
    <location>
        <position position="1"/>
    </location>
</feature>
<feature type="non-terminal residue">
    <location>
        <position position="520"/>
    </location>
</feature>
<dbReference type="EMBL" id="X58067">
    <property type="protein sequence ID" value="CAA41098.1"/>
    <property type="molecule type" value="Genomic_RNA"/>
</dbReference>
<dbReference type="PIR" id="S14600">
    <property type="entry name" value="S14600"/>
</dbReference>
<dbReference type="GlyCosmos" id="P30206">
    <property type="glycosylation" value="19 sites, No reported glycans"/>
</dbReference>
<dbReference type="GO" id="GO:0044173">
    <property type="term" value="C:host cell endoplasmic reticulum-Golgi intermediate compartment membrane"/>
    <property type="evidence" value="ECO:0007669"/>
    <property type="project" value="UniProtKB-SubCell"/>
</dbReference>
<dbReference type="GO" id="GO:0016020">
    <property type="term" value="C:membrane"/>
    <property type="evidence" value="ECO:0007669"/>
    <property type="project" value="UniProtKB-KW"/>
</dbReference>
<dbReference type="GO" id="GO:0019031">
    <property type="term" value="C:viral envelope"/>
    <property type="evidence" value="ECO:0007669"/>
    <property type="project" value="UniProtKB-KW"/>
</dbReference>
<dbReference type="GO" id="GO:0055036">
    <property type="term" value="C:virion membrane"/>
    <property type="evidence" value="ECO:0007669"/>
    <property type="project" value="UniProtKB-SubCell"/>
</dbReference>
<dbReference type="GO" id="GO:0075509">
    <property type="term" value="P:endocytosis involved in viral entry into host cell"/>
    <property type="evidence" value="ECO:0007669"/>
    <property type="project" value="UniProtKB-KW"/>
</dbReference>
<dbReference type="GO" id="GO:0039654">
    <property type="term" value="P:fusion of virus membrane with host endosome membrane"/>
    <property type="evidence" value="ECO:0007669"/>
    <property type="project" value="UniProtKB-KW"/>
</dbReference>
<dbReference type="GO" id="GO:0019062">
    <property type="term" value="P:virion attachment to host cell"/>
    <property type="evidence" value="ECO:0007669"/>
    <property type="project" value="UniProtKB-KW"/>
</dbReference>
<dbReference type="InterPro" id="IPR043607">
    <property type="entry name" value="CoV_S1_C"/>
</dbReference>
<dbReference type="Pfam" id="PF19209">
    <property type="entry name" value="CoV_S1_C"/>
    <property type="match status" value="1"/>
</dbReference>
<sequence length="520" mass="57613">NLFGNNSYVYYYQSAFRPPNGWHLHGGAYEVVNVSTESSNAGTTECTAGAIYWSKNFSAASVAMTAPQNGMLWSTAQFCTAHCNFTDFVVFVTHCYKSASGSCPLTGLIPQYHIRISAMKNSSLFYNLTVAVTKYPRFKSLQCVNNMTSVYLNGDLVFTSNETKDVSAAGVHFKAGGPITYKVMREVKALAYFVNGTAQDVILCDGSPTGLLACQYNTGNFSDGFYPFTNSSLVKEKFIVYRESSVNTTLDVTNFTFSNVSNATPNTGGVHTIQLYQTSTAQSGYYNFNFSFLSSFIYKESDYMYGSYHPSCKFRLETINNGLXFNPLSVSLGYGPIQGGCKQSVFENRATCCYAYSYNGPPLCKGVYRGELTKSFECGLLVFVTKTDGSRIQTRNEPFTLTQHNYNNITLDRCVEYNIYGRVGQGFITNVTNYAINYNYLADGGMAILDTSGAIDIFVVQGEYGLNYYKVNPCEDVNQQFVVSGGKLVGILTSRNETGSQPLENQFYIKIINGTRRSRR</sequence>
<gene>
    <name type="primary">S</name>
    <name type="ORF">2</name>
</gene>
<name>SPIKE_IBVU1</name>
<organism>
    <name type="scientific">Avian infectious bronchitis virus (strain UK/123/82)</name>
    <name type="common">IBV</name>
    <dbReference type="NCBI Taxonomy" id="31626"/>
    <lineage>
        <taxon>Viruses</taxon>
        <taxon>Riboviria</taxon>
        <taxon>Orthornavirae</taxon>
        <taxon>Pisuviricota</taxon>
        <taxon>Pisoniviricetes</taxon>
        <taxon>Nidovirales</taxon>
        <taxon>Cornidovirineae</taxon>
        <taxon>Coronaviridae</taxon>
        <taxon>Orthocoronavirinae</taxon>
        <taxon>Gammacoronavirus</taxon>
        <taxon>Igacovirus</taxon>
        <taxon>Avian coronavirus</taxon>
    </lineage>
</organism>